<gene>
    <name evidence="1" type="primary">groES</name>
    <name evidence="1" type="synonym">groS</name>
    <name type="synonym">hsp10</name>
    <name type="ordered locus">LIC_11336</name>
</gene>
<reference key="1">
    <citation type="journal article" date="1993" name="Mol. Microbiol.">
        <title>Molecular analysis of the hsp (groE) operon of Leptospira interrogans serovar copenhageni.</title>
        <authorList>
            <person name="Ballard S.A."/>
            <person name="Segers R.P."/>
            <person name="Bleumink-Pluym N.M."/>
            <person name="Fyfe J.A.M."/>
            <person name="Faine S."/>
            <person name="Adler B."/>
        </authorList>
    </citation>
    <scope>NUCLEOTIDE SEQUENCE [GENOMIC DNA]</scope>
    <source>
        <strain>Wijnberg</strain>
    </source>
</reference>
<reference key="2">
    <citation type="journal article" date="2004" name="J. Bacteriol.">
        <title>Comparative genomics of two Leptospira interrogans serovars reveals novel insights into physiology and pathogenesis.</title>
        <authorList>
            <person name="Nascimento A.L.T.O."/>
            <person name="Ko A.I."/>
            <person name="Martins E.A.L."/>
            <person name="Monteiro-Vitorello C.B."/>
            <person name="Ho P.L."/>
            <person name="Haake D.A."/>
            <person name="Verjovski-Almeida S."/>
            <person name="Hartskeerl R.A."/>
            <person name="Marques M.V."/>
            <person name="Oliveira M.C."/>
            <person name="Menck C.F.M."/>
            <person name="Leite L.C.C."/>
            <person name="Carrer H."/>
            <person name="Coutinho L.L."/>
            <person name="Degrave W.M."/>
            <person name="Dellagostin O.A."/>
            <person name="El-Dorry H."/>
            <person name="Ferro E.S."/>
            <person name="Ferro M.I.T."/>
            <person name="Furlan L.R."/>
            <person name="Gamberini M."/>
            <person name="Giglioti E.A."/>
            <person name="Goes-Neto A."/>
            <person name="Goldman G.H."/>
            <person name="Goldman M.H.S."/>
            <person name="Harakava R."/>
            <person name="Jeronimo S.M.B."/>
            <person name="Junqueira-de-Azevedo I.L.M."/>
            <person name="Kimura E.T."/>
            <person name="Kuramae E.E."/>
            <person name="Lemos E.G.M."/>
            <person name="Lemos M.V.F."/>
            <person name="Marino C.L."/>
            <person name="Nunes L.R."/>
            <person name="de Oliveira R.C."/>
            <person name="Pereira G.G."/>
            <person name="Reis M.S."/>
            <person name="Schriefer A."/>
            <person name="Siqueira W.J."/>
            <person name="Sommer P."/>
            <person name="Tsai S.M."/>
            <person name="Simpson A.J.G."/>
            <person name="Ferro J.A."/>
            <person name="Camargo L.E.A."/>
            <person name="Kitajima J.P."/>
            <person name="Setubal J.C."/>
            <person name="Van Sluys M.A."/>
        </authorList>
    </citation>
    <scope>NUCLEOTIDE SEQUENCE [LARGE SCALE GENOMIC DNA]</scope>
    <source>
        <strain>Fiocruz L1-130</strain>
    </source>
</reference>
<accession>P61436</accession>
<accession>P35472</accession>
<comment type="function">
    <text evidence="1">Together with the chaperonin GroEL, plays an essential role in assisting protein folding. The GroEL-GroES system forms a nano-cage that allows encapsulation of the non-native substrate proteins and provides a physical environment optimized to promote and accelerate protein folding. GroES binds to the apical surface of the GroEL ring, thereby capping the opening of the GroEL channel.</text>
</comment>
<comment type="subunit">
    <text evidence="1">Heptamer of 7 subunits arranged in a ring. Interacts with the chaperonin GroEL.</text>
</comment>
<comment type="subcellular location">
    <subcellularLocation>
        <location evidence="1">Cytoplasm</location>
    </subcellularLocation>
</comment>
<comment type="induction">
    <text>By heat shock.</text>
</comment>
<comment type="similarity">
    <text evidence="1 2">Belongs to the GroES chaperonin family.</text>
</comment>
<feature type="chain" id="PRO_0000174778" description="Co-chaperonin GroES">
    <location>
        <begin position="1"/>
        <end position="96"/>
    </location>
</feature>
<protein>
    <recommendedName>
        <fullName evidence="1">Co-chaperonin GroES</fullName>
    </recommendedName>
    <alternativeName>
        <fullName evidence="1">10 kDa chaperonin</fullName>
    </alternativeName>
    <alternativeName>
        <fullName evidence="1">Chaperonin-10</fullName>
        <shortName evidence="1">Cpn10</shortName>
    </alternativeName>
</protein>
<sequence>MASIKPLGDRVLVEPRQEAEEKIGSIFVPDTAKEKPQEGKVVEIGSGKYEDGKLIPLEVKVGDTVLYGKYSGTEIKSEGKEYLIIRESDILAVVKK</sequence>
<organism>
    <name type="scientific">Leptospira interrogans serogroup Icterohaemorrhagiae serovar copenhageni (strain Fiocruz L1-130)</name>
    <dbReference type="NCBI Taxonomy" id="267671"/>
    <lineage>
        <taxon>Bacteria</taxon>
        <taxon>Pseudomonadati</taxon>
        <taxon>Spirochaetota</taxon>
        <taxon>Spirochaetia</taxon>
        <taxon>Leptospirales</taxon>
        <taxon>Leptospiraceae</taxon>
        <taxon>Leptospira</taxon>
    </lineage>
</organism>
<keyword id="KW-0143">Chaperone</keyword>
<keyword id="KW-0963">Cytoplasm</keyword>
<keyword id="KW-0346">Stress response</keyword>
<proteinExistence type="evidence at transcript level"/>
<name>CH10_LEPIC</name>
<evidence type="ECO:0000255" key="1">
    <source>
        <dbReference type="HAMAP-Rule" id="MF_00580"/>
    </source>
</evidence>
<evidence type="ECO:0000305" key="2"/>
<dbReference type="EMBL" id="L14682">
    <property type="protein sequence ID" value="AAA71991.1"/>
    <property type="molecule type" value="Genomic_DNA"/>
</dbReference>
<dbReference type="EMBL" id="AE016823">
    <property type="protein sequence ID" value="AAS69937.1"/>
    <property type="molecule type" value="Genomic_DNA"/>
</dbReference>
<dbReference type="PIR" id="S34937">
    <property type="entry name" value="S34937"/>
</dbReference>
<dbReference type="RefSeq" id="WP_000146552.1">
    <property type="nucleotide sequence ID" value="NC_005823.1"/>
</dbReference>
<dbReference type="SMR" id="P61436"/>
<dbReference type="GeneID" id="61144645"/>
<dbReference type="KEGG" id="lic:LIC_11336"/>
<dbReference type="HOGENOM" id="CLU_132825_2_0_12"/>
<dbReference type="Proteomes" id="UP000007037">
    <property type="component" value="Chromosome I"/>
</dbReference>
<dbReference type="GO" id="GO:0005737">
    <property type="term" value="C:cytoplasm"/>
    <property type="evidence" value="ECO:0007669"/>
    <property type="project" value="UniProtKB-SubCell"/>
</dbReference>
<dbReference type="GO" id="GO:0005524">
    <property type="term" value="F:ATP binding"/>
    <property type="evidence" value="ECO:0007669"/>
    <property type="project" value="InterPro"/>
</dbReference>
<dbReference type="GO" id="GO:0046872">
    <property type="term" value="F:metal ion binding"/>
    <property type="evidence" value="ECO:0007669"/>
    <property type="project" value="TreeGrafter"/>
</dbReference>
<dbReference type="GO" id="GO:0044183">
    <property type="term" value="F:protein folding chaperone"/>
    <property type="evidence" value="ECO:0007669"/>
    <property type="project" value="InterPro"/>
</dbReference>
<dbReference type="GO" id="GO:0051087">
    <property type="term" value="F:protein-folding chaperone binding"/>
    <property type="evidence" value="ECO:0007669"/>
    <property type="project" value="TreeGrafter"/>
</dbReference>
<dbReference type="GO" id="GO:0051082">
    <property type="term" value="F:unfolded protein binding"/>
    <property type="evidence" value="ECO:0007669"/>
    <property type="project" value="TreeGrafter"/>
</dbReference>
<dbReference type="GO" id="GO:0051085">
    <property type="term" value="P:chaperone cofactor-dependent protein refolding"/>
    <property type="evidence" value="ECO:0007669"/>
    <property type="project" value="TreeGrafter"/>
</dbReference>
<dbReference type="CDD" id="cd00320">
    <property type="entry name" value="cpn10"/>
    <property type="match status" value="1"/>
</dbReference>
<dbReference type="FunFam" id="2.30.33.40:FF:000001">
    <property type="entry name" value="10 kDa chaperonin"/>
    <property type="match status" value="1"/>
</dbReference>
<dbReference type="Gene3D" id="2.30.33.40">
    <property type="entry name" value="GroES chaperonin"/>
    <property type="match status" value="1"/>
</dbReference>
<dbReference type="HAMAP" id="MF_00580">
    <property type="entry name" value="CH10"/>
    <property type="match status" value="1"/>
</dbReference>
<dbReference type="InterPro" id="IPR020818">
    <property type="entry name" value="Chaperonin_GroES"/>
</dbReference>
<dbReference type="InterPro" id="IPR037124">
    <property type="entry name" value="Chaperonin_GroES_sf"/>
</dbReference>
<dbReference type="InterPro" id="IPR018369">
    <property type="entry name" value="Chaprnonin_Cpn10_CS"/>
</dbReference>
<dbReference type="InterPro" id="IPR011032">
    <property type="entry name" value="GroES-like_sf"/>
</dbReference>
<dbReference type="NCBIfam" id="NF001531">
    <property type="entry name" value="PRK00364.2-2"/>
    <property type="match status" value="1"/>
</dbReference>
<dbReference type="NCBIfam" id="NF001533">
    <property type="entry name" value="PRK00364.2-4"/>
    <property type="match status" value="1"/>
</dbReference>
<dbReference type="NCBIfam" id="NF001534">
    <property type="entry name" value="PRK00364.2-5"/>
    <property type="match status" value="1"/>
</dbReference>
<dbReference type="PANTHER" id="PTHR10772">
    <property type="entry name" value="10 KDA HEAT SHOCK PROTEIN"/>
    <property type="match status" value="1"/>
</dbReference>
<dbReference type="PANTHER" id="PTHR10772:SF58">
    <property type="entry name" value="CO-CHAPERONIN GROES"/>
    <property type="match status" value="1"/>
</dbReference>
<dbReference type="Pfam" id="PF00166">
    <property type="entry name" value="Cpn10"/>
    <property type="match status" value="1"/>
</dbReference>
<dbReference type="PRINTS" id="PR00297">
    <property type="entry name" value="CHAPERONIN10"/>
</dbReference>
<dbReference type="SMART" id="SM00883">
    <property type="entry name" value="Cpn10"/>
    <property type="match status" value="1"/>
</dbReference>
<dbReference type="SUPFAM" id="SSF50129">
    <property type="entry name" value="GroES-like"/>
    <property type="match status" value="1"/>
</dbReference>
<dbReference type="PROSITE" id="PS00681">
    <property type="entry name" value="CHAPERONINS_CPN10"/>
    <property type="match status" value="1"/>
</dbReference>